<proteinExistence type="evidence at protein level"/>
<name>DEGS2_MOUSE</name>
<accession>Q8R2F2</accession>
<accession>Q3TR85</accession>
<accession>Q78JJ1</accession>
<dbReference type="EC" id="1.14.18.5" evidence="4 5 8"/>
<dbReference type="EC" id="1.14.19.17" evidence="5 8"/>
<dbReference type="EMBL" id="AF466377">
    <property type="protein sequence ID" value="AAM12533.1"/>
    <property type="molecule type" value="mRNA"/>
</dbReference>
<dbReference type="EMBL" id="AK162979">
    <property type="protein sequence ID" value="BAE37145.1"/>
    <property type="molecule type" value="mRNA"/>
</dbReference>
<dbReference type="EMBL" id="BC016427">
    <property type="protein sequence ID" value="AAH16427.2"/>
    <property type="molecule type" value="mRNA"/>
</dbReference>
<dbReference type="CCDS" id="CCDS26162.1">
    <molecule id="Q8R2F2-1"/>
</dbReference>
<dbReference type="CCDS" id="CCDS49170.1">
    <molecule id="Q8R2F2-2"/>
</dbReference>
<dbReference type="RefSeq" id="NP_001164473.1">
    <molecule id="Q8R2F2-2"/>
    <property type="nucleotide sequence ID" value="NM_001171002.1"/>
</dbReference>
<dbReference type="RefSeq" id="NP_081575.2">
    <molecule id="Q8R2F2-1"/>
    <property type="nucleotide sequence ID" value="NM_027299.5"/>
</dbReference>
<dbReference type="FunCoup" id="Q8R2F2">
    <property type="interactions" value="166"/>
</dbReference>
<dbReference type="STRING" id="10090.ENSMUSP00000021691"/>
<dbReference type="SwissLipids" id="SLP:000000168"/>
<dbReference type="PhosphoSitePlus" id="Q8R2F2"/>
<dbReference type="PaxDb" id="10090-ENSMUSP00000021691"/>
<dbReference type="ProteomicsDB" id="279400">
    <molecule id="Q8R2F2-1"/>
</dbReference>
<dbReference type="ProteomicsDB" id="279401">
    <molecule id="Q8R2F2-2"/>
</dbReference>
<dbReference type="Antibodypedia" id="54980">
    <property type="antibodies" value="78 antibodies from 14 providers"/>
</dbReference>
<dbReference type="DNASU" id="70059"/>
<dbReference type="Ensembl" id="ENSMUST00000021691.6">
    <molecule id="Q8R2F2-1"/>
    <property type="protein sequence ID" value="ENSMUSP00000021691.5"/>
    <property type="gene ID" value="ENSMUSG00000021263.12"/>
</dbReference>
<dbReference type="Ensembl" id="ENSMUST00000167978.9">
    <molecule id="Q8R2F2-2"/>
    <property type="protein sequence ID" value="ENSMUSP00000125891.2"/>
    <property type="gene ID" value="ENSMUSG00000021263.12"/>
</dbReference>
<dbReference type="GeneID" id="70059"/>
<dbReference type="KEGG" id="mmu:70059"/>
<dbReference type="UCSC" id="uc007pab.2">
    <molecule id="Q8R2F2-1"/>
    <property type="organism name" value="mouse"/>
</dbReference>
<dbReference type="UCSC" id="uc011yrv.1">
    <molecule id="Q8R2F2-2"/>
    <property type="organism name" value="mouse"/>
</dbReference>
<dbReference type="AGR" id="MGI:1917309"/>
<dbReference type="CTD" id="123099"/>
<dbReference type="MGI" id="MGI:1917309">
    <property type="gene designation" value="Degs2"/>
</dbReference>
<dbReference type="VEuPathDB" id="HostDB:ENSMUSG00000021263"/>
<dbReference type="eggNOG" id="KOG2987">
    <property type="taxonomic scope" value="Eukaryota"/>
</dbReference>
<dbReference type="GeneTree" id="ENSGT00390000013448"/>
<dbReference type="HOGENOM" id="CLU_032156_0_0_1"/>
<dbReference type="InParanoid" id="Q8R2F2"/>
<dbReference type="OMA" id="FEGWLFC"/>
<dbReference type="OrthoDB" id="200948at2759"/>
<dbReference type="PhylomeDB" id="Q8R2F2"/>
<dbReference type="TreeFam" id="TF313582"/>
<dbReference type="BRENDA" id="1.14.18.5">
    <property type="organism ID" value="3474"/>
</dbReference>
<dbReference type="Reactome" id="R-MMU-1660661">
    <property type="pathway name" value="Sphingolipid de novo biosynthesis"/>
</dbReference>
<dbReference type="UniPathway" id="UPA00786"/>
<dbReference type="BioGRID-ORCS" id="70059">
    <property type="hits" value="3 hits in 80 CRISPR screens"/>
</dbReference>
<dbReference type="ChiTaRS" id="Degs2">
    <property type="organism name" value="mouse"/>
</dbReference>
<dbReference type="PRO" id="PR:Q8R2F2"/>
<dbReference type="Proteomes" id="UP000000589">
    <property type="component" value="Chromosome 12"/>
</dbReference>
<dbReference type="RNAct" id="Q8R2F2">
    <property type="molecule type" value="protein"/>
</dbReference>
<dbReference type="Bgee" id="ENSMUSG00000021263">
    <property type="expression patterns" value="Expressed in crypt of Lieberkuhn of small intestine and 85 other cell types or tissues"/>
</dbReference>
<dbReference type="ExpressionAtlas" id="Q8R2F2">
    <property type="expression patterns" value="baseline and differential"/>
</dbReference>
<dbReference type="GO" id="GO:0005789">
    <property type="term" value="C:endoplasmic reticulum membrane"/>
    <property type="evidence" value="ECO:0007669"/>
    <property type="project" value="UniProtKB-SubCell"/>
</dbReference>
<dbReference type="GO" id="GO:0016020">
    <property type="term" value="C:membrane"/>
    <property type="evidence" value="ECO:0007669"/>
    <property type="project" value="GOC"/>
</dbReference>
<dbReference type="GO" id="GO:0102772">
    <property type="term" value="F:sphingolipid C4-monooxygenase activity"/>
    <property type="evidence" value="ECO:0007669"/>
    <property type="project" value="UniProtKB-EC"/>
</dbReference>
<dbReference type="GO" id="GO:0042284">
    <property type="term" value="F:sphingolipid delta-4 desaturase activity"/>
    <property type="evidence" value="ECO:0000316"/>
    <property type="project" value="MGI"/>
</dbReference>
<dbReference type="GO" id="GO:0046513">
    <property type="term" value="P:ceramide biosynthetic process"/>
    <property type="evidence" value="ECO:0000314"/>
    <property type="project" value="MGI"/>
</dbReference>
<dbReference type="GO" id="GO:0006667">
    <property type="term" value="P:sphinganine metabolic process"/>
    <property type="evidence" value="ECO:0000314"/>
    <property type="project" value="MGI"/>
</dbReference>
<dbReference type="GO" id="GO:0030148">
    <property type="term" value="P:sphingolipid biosynthetic process"/>
    <property type="evidence" value="ECO:0000316"/>
    <property type="project" value="MGI"/>
</dbReference>
<dbReference type="CDD" id="cd03508">
    <property type="entry name" value="Delta4-sphingolipid-FADS-like"/>
    <property type="match status" value="1"/>
</dbReference>
<dbReference type="InterPro" id="IPR011388">
    <property type="entry name" value="DES1/DES2"/>
</dbReference>
<dbReference type="InterPro" id="IPR005804">
    <property type="entry name" value="FA_desaturase_dom"/>
</dbReference>
<dbReference type="InterPro" id="IPR013866">
    <property type="entry name" value="Sphingolipid_d4-desaturase_N"/>
</dbReference>
<dbReference type="PANTHER" id="PTHR12879">
    <property type="entry name" value="SPHINGOLIPID DELTA 4 DESATURASE/C-4 HYDROXYLASE PROTEIN DES2"/>
    <property type="match status" value="1"/>
</dbReference>
<dbReference type="PANTHER" id="PTHR12879:SF21">
    <property type="entry name" value="SPHINGOLIPID DELTA(4)-DESATURASE_C4-MONOOXYGENASE DES2"/>
    <property type="match status" value="1"/>
</dbReference>
<dbReference type="Pfam" id="PF00487">
    <property type="entry name" value="FA_desaturase"/>
    <property type="match status" value="1"/>
</dbReference>
<dbReference type="Pfam" id="PF08557">
    <property type="entry name" value="Lipid_DES"/>
    <property type="match status" value="1"/>
</dbReference>
<dbReference type="PIRSF" id="PIRSF017228">
    <property type="entry name" value="Sphnglp_dlt4_des"/>
    <property type="match status" value="1"/>
</dbReference>
<dbReference type="SMART" id="SM01269">
    <property type="entry name" value="Lipid_DES"/>
    <property type="match status" value="1"/>
</dbReference>
<evidence type="ECO:0000250" key="1">
    <source>
        <dbReference type="UniProtKB" id="Q564G3"/>
    </source>
</evidence>
<evidence type="ECO:0000250" key="2">
    <source>
        <dbReference type="UniProtKB" id="Q6QHC5"/>
    </source>
</evidence>
<evidence type="ECO:0000255" key="3"/>
<evidence type="ECO:0000269" key="4">
    <source>
    </source>
</evidence>
<evidence type="ECO:0000269" key="5">
    <source>
    </source>
</evidence>
<evidence type="ECO:0000269" key="6">
    <source>
    </source>
</evidence>
<evidence type="ECO:0000269" key="7">
    <source>
    </source>
</evidence>
<evidence type="ECO:0000269" key="8">
    <source>
    </source>
</evidence>
<evidence type="ECO:0000303" key="9">
    <source>
    </source>
</evidence>
<evidence type="ECO:0000305" key="10"/>
<evidence type="ECO:0000305" key="11">
    <source>
    </source>
</evidence>
<evidence type="ECO:0000312" key="12">
    <source>
        <dbReference type="EMBL" id="AAH16427.2"/>
    </source>
</evidence>
<evidence type="ECO:0000312" key="13">
    <source>
        <dbReference type="EMBL" id="AAM12533.1"/>
    </source>
</evidence>
<evidence type="ECO:0000312" key="14">
    <source>
        <dbReference type="EMBL" id="BAE37145.1"/>
    </source>
</evidence>
<evidence type="ECO:0000312" key="15">
    <source>
        <dbReference type="MGI" id="MGI:1917309"/>
    </source>
</evidence>
<organism>
    <name type="scientific">Mus musculus</name>
    <name type="common">Mouse</name>
    <dbReference type="NCBI Taxonomy" id="10090"/>
    <lineage>
        <taxon>Eukaryota</taxon>
        <taxon>Metazoa</taxon>
        <taxon>Chordata</taxon>
        <taxon>Craniata</taxon>
        <taxon>Vertebrata</taxon>
        <taxon>Euteleostomi</taxon>
        <taxon>Mammalia</taxon>
        <taxon>Eutheria</taxon>
        <taxon>Euarchontoglires</taxon>
        <taxon>Glires</taxon>
        <taxon>Rodentia</taxon>
        <taxon>Myomorpha</taxon>
        <taxon>Muroidea</taxon>
        <taxon>Muridae</taxon>
        <taxon>Murinae</taxon>
        <taxon>Mus</taxon>
        <taxon>Mus</taxon>
    </lineage>
</organism>
<comment type="function">
    <text evidence="4 5 8">Bifunctional enzyme which acts both as a sphingolipid delta(4)-desaturase and a sphingolipid C4-monooxygenase.</text>
</comment>
<comment type="catalytic activity">
    <reaction evidence="5 8">
        <text>a dihydroceramide + 2 Fe(II)-[cytochrome b5] + O2 + 2 H(+) = a phytoceramide + 2 Fe(III)-[cytochrome b5] + H2O</text>
        <dbReference type="Rhea" id="RHEA:55808"/>
        <dbReference type="Rhea" id="RHEA-COMP:10438"/>
        <dbReference type="Rhea" id="RHEA-COMP:10439"/>
        <dbReference type="ChEBI" id="CHEBI:15377"/>
        <dbReference type="ChEBI" id="CHEBI:15378"/>
        <dbReference type="ChEBI" id="CHEBI:15379"/>
        <dbReference type="ChEBI" id="CHEBI:29033"/>
        <dbReference type="ChEBI" id="CHEBI:29034"/>
        <dbReference type="ChEBI" id="CHEBI:139048"/>
        <dbReference type="ChEBI" id="CHEBI:139051"/>
        <dbReference type="EC" id="1.14.18.5"/>
    </reaction>
</comment>
<comment type="catalytic activity">
    <reaction evidence="4 5 8">
        <text>an N-acylsphinganine + 2 Fe(II)-[cytochrome b5] + O2 + 2 H(+) = an N-acylsphing-4-enine + 2 Fe(III)-[cytochrome b5] + 2 H2O</text>
        <dbReference type="Rhea" id="RHEA:46544"/>
        <dbReference type="Rhea" id="RHEA-COMP:10438"/>
        <dbReference type="Rhea" id="RHEA-COMP:10439"/>
        <dbReference type="ChEBI" id="CHEBI:15377"/>
        <dbReference type="ChEBI" id="CHEBI:15378"/>
        <dbReference type="ChEBI" id="CHEBI:15379"/>
        <dbReference type="ChEBI" id="CHEBI:29033"/>
        <dbReference type="ChEBI" id="CHEBI:29034"/>
        <dbReference type="ChEBI" id="CHEBI:31488"/>
        <dbReference type="ChEBI" id="CHEBI:52639"/>
        <dbReference type="EC" id="1.14.19.17"/>
    </reaction>
    <physiologicalReaction direction="left-to-right" evidence="11">
        <dbReference type="Rhea" id="RHEA:46545"/>
    </physiologicalReaction>
</comment>
<comment type="catalytic activity">
    <reaction evidence="4">
        <text>an N-acylsphinganine + 2 Fe(II)-[cytochrome b5] + O2 + 2 H(+) = an N-acyl-(4R)-4-hydroxysphinganine + 2 Fe(III)-[cytochrome b5] + H2O</text>
        <dbReference type="Rhea" id="RHEA:46364"/>
        <dbReference type="Rhea" id="RHEA-COMP:10438"/>
        <dbReference type="Rhea" id="RHEA-COMP:10439"/>
        <dbReference type="ChEBI" id="CHEBI:15377"/>
        <dbReference type="ChEBI" id="CHEBI:15378"/>
        <dbReference type="ChEBI" id="CHEBI:15379"/>
        <dbReference type="ChEBI" id="CHEBI:29033"/>
        <dbReference type="ChEBI" id="CHEBI:29034"/>
        <dbReference type="ChEBI" id="CHEBI:31488"/>
        <dbReference type="ChEBI" id="CHEBI:31998"/>
        <dbReference type="EC" id="1.14.18.5"/>
    </reaction>
    <physiologicalReaction direction="left-to-right" evidence="11">
        <dbReference type="Rhea" id="RHEA:46365"/>
    </physiologicalReaction>
</comment>
<comment type="catalytic activity">
    <reaction evidence="2">
        <text>N-octanoylsphinganine + 2 Fe(II)-[cytochrome b5] + O2 + 2 H(+) = N-octanoyl-4-hydroxysphinganine + 2 Fe(III)-[cytochrome b5] + H2O</text>
        <dbReference type="Rhea" id="RHEA:43116"/>
        <dbReference type="Rhea" id="RHEA-COMP:10438"/>
        <dbReference type="Rhea" id="RHEA-COMP:10439"/>
        <dbReference type="ChEBI" id="CHEBI:15377"/>
        <dbReference type="ChEBI" id="CHEBI:15378"/>
        <dbReference type="ChEBI" id="CHEBI:15379"/>
        <dbReference type="ChEBI" id="CHEBI:29033"/>
        <dbReference type="ChEBI" id="CHEBI:29034"/>
        <dbReference type="ChEBI" id="CHEBI:82841"/>
        <dbReference type="ChEBI" id="CHEBI:82842"/>
    </reaction>
    <physiologicalReaction direction="left-to-right" evidence="2">
        <dbReference type="Rhea" id="RHEA:43117"/>
    </physiologicalReaction>
</comment>
<comment type="biophysicochemical properties">
    <phDependence>
        <text evidence="5">Optimum pH is 7.0-8.0.</text>
    </phDependence>
</comment>
<comment type="pathway">
    <text evidence="4">Membrane lipid metabolism; sphingolipid biosynthesis.</text>
</comment>
<comment type="subcellular location">
    <subcellularLocation>
        <location evidence="8 10">Endoplasmic reticulum membrane</location>
        <topology evidence="8 10">Multi-pass membrane protein</topology>
    </subcellularLocation>
</comment>
<comment type="alternative products">
    <event type="alternative splicing"/>
    <isoform>
        <id>Q8R2F2-1</id>
        <name evidence="4">1</name>
        <sequence type="displayed"/>
    </isoform>
    <isoform>
        <id>Q8R2F2-2</id>
        <name evidence="7">2</name>
        <sequence type="described" ref="VSP_052629"/>
    </isoform>
</comment>
<comment type="tissue specificity">
    <text evidence="5">Highly expressed in intestinal crypt cells and adjacent epithelial cells (at protein level).</text>
</comment>
<comment type="similarity">
    <text evidence="10">Belongs to the fatty acid desaturase type 1 family. DEGS subfamily.</text>
</comment>
<sequence>MGNSAARSDFEWVYSDQPHTQRRKEMLAKYPAIKALMRPDPHIKWTVSGMVLVQVLACWLVRGLSWRWLLFWAYAFGGCINHSLTLAIHDISHNTAFGTSCVSRNRWFAIFANLPIGLPYATSFKKYHVDHHRYLGGDGLDVDIPTNFEGWFFCTPARKLLWLVLQPFFYSLRPLCVNPKVVTRMEILNALVQLAFDVTIFALWGIKPIVYLLGSSLLGLGLHPISGHFVAEHYMFLKGHETYSYYGPLNWITFNVGYHMEHHDFPSIPGYYLPLVRKIAPEYYDHLPQHHSWVKVLWDFVFEDSMGPYSRVKRKCKLAKDHL</sequence>
<feature type="initiator methionine" description="Removed" evidence="1">
    <location>
        <position position="1"/>
    </location>
</feature>
<feature type="chain" id="PRO_0000312817" description="Sphingolipid delta(4)-desaturase/C4-monooxygenase DES2" evidence="1">
    <location>
        <begin position="2"/>
        <end position="323"/>
    </location>
</feature>
<feature type="transmembrane region" description="Helical" evidence="3">
    <location>
        <begin position="41"/>
        <end position="61"/>
    </location>
</feature>
<feature type="transmembrane region" description="Helical" evidence="3">
    <location>
        <begin position="68"/>
        <end position="88"/>
    </location>
</feature>
<feature type="transmembrane region" description="Helical" evidence="3">
    <location>
        <begin position="210"/>
        <end position="231"/>
    </location>
</feature>
<feature type="region of interest" description="Required for C4-hydroxylase activity" evidence="6">
    <location>
        <begin position="95"/>
        <end position="99"/>
    </location>
</feature>
<feature type="short sequence motif" description="Histidine box-1" evidence="10">
    <location>
        <begin position="89"/>
        <end position="93"/>
    </location>
</feature>
<feature type="short sequence motif" description="Histidine box-2" evidence="10">
    <location>
        <begin position="128"/>
        <end position="132"/>
    </location>
</feature>
<feature type="short sequence motif" description="Histidine box-3" evidence="10">
    <location>
        <begin position="259"/>
        <end position="263"/>
    </location>
</feature>
<feature type="lipid moiety-binding region" description="N-myristoyl glycine" evidence="1">
    <location>
        <position position="2"/>
    </location>
</feature>
<feature type="splice variant" id="VSP_052629" description="In isoform 2." evidence="9">
    <original>VRKIAPEYYDHLPQHHSWVKVLWDFVFEDSMGPYSRVKRKCKLAKDHL</original>
    <variation>DDWNPVRRDVL</variation>
    <location>
        <begin position="276"/>
        <end position="323"/>
    </location>
</feature>
<feature type="sequence conflict" description="In Ref. 2; BAE37145." evidence="10" ref="2">
    <original>I</original>
    <variation>T</variation>
    <location>
        <position position="88"/>
    </location>
</feature>
<keyword id="KW-0025">Alternative splicing</keyword>
<keyword id="KW-0256">Endoplasmic reticulum</keyword>
<keyword id="KW-0444">Lipid biosynthesis</keyword>
<keyword id="KW-0443">Lipid metabolism</keyword>
<keyword id="KW-0449">Lipoprotein</keyword>
<keyword id="KW-0472">Membrane</keyword>
<keyword id="KW-0519">Myristate</keyword>
<keyword id="KW-0560">Oxidoreductase</keyword>
<keyword id="KW-1185">Reference proteome</keyword>
<keyword id="KW-0812">Transmembrane</keyword>
<keyword id="KW-1133">Transmembrane helix</keyword>
<gene>
    <name evidence="15" type="primary">Degs2</name>
</gene>
<protein>
    <recommendedName>
        <fullName>Sphingolipid delta(4)-desaturase/C4-monooxygenase DES2</fullName>
        <ecNumber evidence="4 5 8">1.14.18.5</ecNumber>
        <ecNumber evidence="5 8">1.14.19.17</ecNumber>
    </recommendedName>
    <alternativeName>
        <fullName>Degenerative spermatocyte homolog 2</fullName>
    </alternativeName>
    <alternativeName>
        <fullName>Sphingolipid 4-desaturase</fullName>
    </alternativeName>
    <alternativeName>
        <fullName>Sphingolipid C4-monooxygenase</fullName>
    </alternativeName>
</protein>
<reference key="1">
    <citation type="journal article" date="2002" name="J. Biol. Chem.">
        <title>Identification and characterization of a sphingolipid delta 4-desaturase family.</title>
        <authorList>
            <person name="Ternes P."/>
            <person name="Franke S."/>
            <person name="Zaehringer U."/>
            <person name="Sperling P."/>
            <person name="Heinz E."/>
        </authorList>
    </citation>
    <scope>NUCLEOTIDE SEQUENCE [MRNA] (ISOFORM 1)</scope>
    <scope>FUNCTION</scope>
    <scope>PATHWAY</scope>
    <scope>CATALYTIC ACTIVITY</scope>
    <source>
        <strain evidence="13">FVB/N</strain>
    </source>
</reference>
<reference key="2">
    <citation type="journal article" date="2005" name="Science">
        <title>The transcriptional landscape of the mammalian genome.</title>
        <authorList>
            <person name="Carninci P."/>
            <person name="Kasukawa T."/>
            <person name="Katayama S."/>
            <person name="Gough J."/>
            <person name="Frith M.C."/>
            <person name="Maeda N."/>
            <person name="Oyama R."/>
            <person name="Ravasi T."/>
            <person name="Lenhard B."/>
            <person name="Wells C."/>
            <person name="Kodzius R."/>
            <person name="Shimokawa K."/>
            <person name="Bajic V.B."/>
            <person name="Brenner S.E."/>
            <person name="Batalov S."/>
            <person name="Forrest A.R."/>
            <person name="Zavolan M."/>
            <person name="Davis M.J."/>
            <person name="Wilming L.G."/>
            <person name="Aidinis V."/>
            <person name="Allen J.E."/>
            <person name="Ambesi-Impiombato A."/>
            <person name="Apweiler R."/>
            <person name="Aturaliya R.N."/>
            <person name="Bailey T.L."/>
            <person name="Bansal M."/>
            <person name="Baxter L."/>
            <person name="Beisel K.W."/>
            <person name="Bersano T."/>
            <person name="Bono H."/>
            <person name="Chalk A.M."/>
            <person name="Chiu K.P."/>
            <person name="Choudhary V."/>
            <person name="Christoffels A."/>
            <person name="Clutterbuck D.R."/>
            <person name="Crowe M.L."/>
            <person name="Dalla E."/>
            <person name="Dalrymple B.P."/>
            <person name="de Bono B."/>
            <person name="Della Gatta G."/>
            <person name="di Bernardo D."/>
            <person name="Down T."/>
            <person name="Engstrom P."/>
            <person name="Fagiolini M."/>
            <person name="Faulkner G."/>
            <person name="Fletcher C.F."/>
            <person name="Fukushima T."/>
            <person name="Furuno M."/>
            <person name="Futaki S."/>
            <person name="Gariboldi M."/>
            <person name="Georgii-Hemming P."/>
            <person name="Gingeras T.R."/>
            <person name="Gojobori T."/>
            <person name="Green R.E."/>
            <person name="Gustincich S."/>
            <person name="Harbers M."/>
            <person name="Hayashi Y."/>
            <person name="Hensch T.K."/>
            <person name="Hirokawa N."/>
            <person name="Hill D."/>
            <person name="Huminiecki L."/>
            <person name="Iacono M."/>
            <person name="Ikeo K."/>
            <person name="Iwama A."/>
            <person name="Ishikawa T."/>
            <person name="Jakt M."/>
            <person name="Kanapin A."/>
            <person name="Katoh M."/>
            <person name="Kawasawa Y."/>
            <person name="Kelso J."/>
            <person name="Kitamura H."/>
            <person name="Kitano H."/>
            <person name="Kollias G."/>
            <person name="Krishnan S.P."/>
            <person name="Kruger A."/>
            <person name="Kummerfeld S.K."/>
            <person name="Kurochkin I.V."/>
            <person name="Lareau L.F."/>
            <person name="Lazarevic D."/>
            <person name="Lipovich L."/>
            <person name="Liu J."/>
            <person name="Liuni S."/>
            <person name="McWilliam S."/>
            <person name="Madan Babu M."/>
            <person name="Madera M."/>
            <person name="Marchionni L."/>
            <person name="Matsuda H."/>
            <person name="Matsuzawa S."/>
            <person name="Miki H."/>
            <person name="Mignone F."/>
            <person name="Miyake S."/>
            <person name="Morris K."/>
            <person name="Mottagui-Tabar S."/>
            <person name="Mulder N."/>
            <person name="Nakano N."/>
            <person name="Nakauchi H."/>
            <person name="Ng P."/>
            <person name="Nilsson R."/>
            <person name="Nishiguchi S."/>
            <person name="Nishikawa S."/>
            <person name="Nori F."/>
            <person name="Ohara O."/>
            <person name="Okazaki Y."/>
            <person name="Orlando V."/>
            <person name="Pang K.C."/>
            <person name="Pavan W.J."/>
            <person name="Pavesi G."/>
            <person name="Pesole G."/>
            <person name="Petrovsky N."/>
            <person name="Piazza S."/>
            <person name="Reed J."/>
            <person name="Reid J.F."/>
            <person name="Ring B.Z."/>
            <person name="Ringwald M."/>
            <person name="Rost B."/>
            <person name="Ruan Y."/>
            <person name="Salzberg S.L."/>
            <person name="Sandelin A."/>
            <person name="Schneider C."/>
            <person name="Schoenbach C."/>
            <person name="Sekiguchi K."/>
            <person name="Semple C.A."/>
            <person name="Seno S."/>
            <person name="Sessa L."/>
            <person name="Sheng Y."/>
            <person name="Shibata Y."/>
            <person name="Shimada H."/>
            <person name="Shimada K."/>
            <person name="Silva D."/>
            <person name="Sinclair B."/>
            <person name="Sperling S."/>
            <person name="Stupka E."/>
            <person name="Sugiura K."/>
            <person name="Sultana R."/>
            <person name="Takenaka Y."/>
            <person name="Taki K."/>
            <person name="Tammoja K."/>
            <person name="Tan S.L."/>
            <person name="Tang S."/>
            <person name="Taylor M.S."/>
            <person name="Tegner J."/>
            <person name="Teichmann S.A."/>
            <person name="Ueda H.R."/>
            <person name="van Nimwegen E."/>
            <person name="Verardo R."/>
            <person name="Wei C.L."/>
            <person name="Yagi K."/>
            <person name="Yamanishi H."/>
            <person name="Zabarovsky E."/>
            <person name="Zhu S."/>
            <person name="Zimmer A."/>
            <person name="Hide W."/>
            <person name="Bult C."/>
            <person name="Grimmond S.M."/>
            <person name="Teasdale R.D."/>
            <person name="Liu E.T."/>
            <person name="Brusic V."/>
            <person name="Quackenbush J."/>
            <person name="Wahlestedt C."/>
            <person name="Mattick J.S."/>
            <person name="Hume D.A."/>
            <person name="Kai C."/>
            <person name="Sasaki D."/>
            <person name="Tomaru Y."/>
            <person name="Fukuda S."/>
            <person name="Kanamori-Katayama M."/>
            <person name="Suzuki M."/>
            <person name="Aoki J."/>
            <person name="Arakawa T."/>
            <person name="Iida J."/>
            <person name="Imamura K."/>
            <person name="Itoh M."/>
            <person name="Kato T."/>
            <person name="Kawaji H."/>
            <person name="Kawagashira N."/>
            <person name="Kawashima T."/>
            <person name="Kojima M."/>
            <person name="Kondo S."/>
            <person name="Konno H."/>
            <person name="Nakano K."/>
            <person name="Ninomiya N."/>
            <person name="Nishio T."/>
            <person name="Okada M."/>
            <person name="Plessy C."/>
            <person name="Shibata K."/>
            <person name="Shiraki T."/>
            <person name="Suzuki S."/>
            <person name="Tagami M."/>
            <person name="Waki K."/>
            <person name="Watahiki A."/>
            <person name="Okamura-Oho Y."/>
            <person name="Suzuki H."/>
            <person name="Kawai J."/>
            <person name="Hayashizaki Y."/>
        </authorList>
    </citation>
    <scope>NUCLEOTIDE SEQUENCE [LARGE SCALE MRNA] (ISOFORM 2)</scope>
    <source>
        <strain evidence="14">C57BL/6J</strain>
        <tissue evidence="14">Thymus</tissue>
    </source>
</reference>
<reference key="3">
    <citation type="journal article" date="2004" name="Genome Res.">
        <title>The status, quality, and expansion of the NIH full-length cDNA project: the Mammalian Gene Collection (MGC).</title>
        <authorList>
            <consortium name="The MGC Project Team"/>
        </authorList>
    </citation>
    <scope>NUCLEOTIDE SEQUENCE [LARGE SCALE MRNA] (ISOFORM 1)</scope>
    <source>
        <strain evidence="12">FVB/N</strain>
        <tissue evidence="12">Colon</tissue>
    </source>
</reference>
<reference key="4">
    <citation type="journal article" date="2004" name="Biochem. J.">
        <title>DES2 protein is responsible for phytoceramide biosynthesis in the mouse small intestine.</title>
        <authorList>
            <person name="Omae F."/>
            <person name="Miyazaki M."/>
            <person name="Enomoto A."/>
            <person name="Suzuki M."/>
            <person name="Suzuki Y."/>
            <person name="Suzuki A."/>
        </authorList>
    </citation>
    <scope>FUNCTION</scope>
    <scope>CATALYTIC ACTIVITY</scope>
    <scope>BIOPHYSICOCHEMICAL PROPERTIES</scope>
    <scope>TISSUE SPECIFICITY</scope>
</reference>
<reference key="5">
    <citation type="journal article" date="2004" name="FEBS Lett.">
        <title>Identification of an essential sequence for dihydroceramide C-4 hydroxylase activity of mouse DES2.</title>
        <authorList>
            <person name="Omae F."/>
            <person name="Miyazaki M."/>
            <person name="Enomoto A."/>
            <person name="Suzuki A."/>
        </authorList>
    </citation>
    <scope>REGION REQUIRED FOR HYDROLASE ACTIVITY</scope>
</reference>
<reference key="6">
    <citation type="journal article" date="2006" name="Biochem. J.">
        <title>Dihydroceramide:sphinganine C-4-hydroxylation requires Des2 hydroxylase and the membrane form of cytochrome b5.</title>
        <authorList>
            <person name="Enomoto A."/>
            <person name="Omae F."/>
            <person name="Miyazaki M."/>
            <person name="Kozutsumi Y."/>
            <person name="Yubisui T."/>
            <person name="Suzuki A."/>
        </authorList>
    </citation>
    <scope>FUNCTION</scope>
    <scope>CATALYTIC ACTIVITY</scope>
    <scope>SUBCELLULAR LOCATION</scope>
</reference>